<organism>
    <name type="scientific">Bartonella henselae (strain ATCC 49882 / DSM 28221 / CCUG 30454 / Houston 1)</name>
    <name type="common">Rochalimaea henselae</name>
    <dbReference type="NCBI Taxonomy" id="283166"/>
    <lineage>
        <taxon>Bacteria</taxon>
        <taxon>Pseudomonadati</taxon>
        <taxon>Pseudomonadota</taxon>
        <taxon>Alphaproteobacteria</taxon>
        <taxon>Hyphomicrobiales</taxon>
        <taxon>Bartonellaceae</taxon>
        <taxon>Bartonella</taxon>
    </lineage>
</organism>
<keyword id="KW-0067">ATP-binding</keyword>
<keyword id="KW-0315">Glutamine amidotransferase</keyword>
<keyword id="KW-0332">GMP biosynthesis</keyword>
<keyword id="KW-0436">Ligase</keyword>
<keyword id="KW-0547">Nucleotide-binding</keyword>
<keyword id="KW-0658">Purine biosynthesis</keyword>
<name>GUAA_BARHE</name>
<reference key="1">
    <citation type="journal article" date="2004" name="Proc. Natl. Acad. Sci. U.S.A.">
        <title>The louse-borne human pathogen Bartonella quintana is a genomic derivative of the zoonotic agent Bartonella henselae.</title>
        <authorList>
            <person name="Alsmark U.C.M."/>
            <person name="Frank A.C."/>
            <person name="Karlberg E.O."/>
            <person name="Legault B.-A."/>
            <person name="Ardell D.H."/>
            <person name="Canbaeck B."/>
            <person name="Eriksson A.-S."/>
            <person name="Naeslund A.K."/>
            <person name="Handley S.A."/>
            <person name="Huvet M."/>
            <person name="La Scola B."/>
            <person name="Holmberg M."/>
            <person name="Andersson S.G.E."/>
        </authorList>
    </citation>
    <scope>NUCLEOTIDE SEQUENCE [LARGE SCALE GENOMIC DNA]</scope>
    <source>
        <strain>ATCC 49882 / DSM 28221 / CCUG 30454 / Houston 1</strain>
    </source>
</reference>
<proteinExistence type="inferred from homology"/>
<feature type="chain" id="PRO_0000229405" description="GMP synthase [glutamine-hydrolyzing]">
    <location>
        <begin position="1"/>
        <end position="518"/>
    </location>
</feature>
<feature type="domain" description="Glutamine amidotransferase type-1" evidence="1">
    <location>
        <begin position="8"/>
        <end position="201"/>
    </location>
</feature>
<feature type="domain" description="GMPS ATP-PPase" evidence="1">
    <location>
        <begin position="202"/>
        <end position="393"/>
    </location>
</feature>
<feature type="active site" description="Nucleophile" evidence="1">
    <location>
        <position position="85"/>
    </location>
</feature>
<feature type="active site" evidence="1">
    <location>
        <position position="175"/>
    </location>
</feature>
<feature type="active site" evidence="1">
    <location>
        <position position="177"/>
    </location>
</feature>
<feature type="binding site" evidence="1">
    <location>
        <begin position="229"/>
        <end position="235"/>
    </location>
    <ligand>
        <name>ATP</name>
        <dbReference type="ChEBI" id="CHEBI:30616"/>
    </ligand>
</feature>
<gene>
    <name evidence="1" type="primary">guaA</name>
    <name type="ordered locus">BH01820</name>
</gene>
<evidence type="ECO:0000255" key="1">
    <source>
        <dbReference type="HAMAP-Rule" id="MF_00344"/>
    </source>
</evidence>
<sequence>MSISHSDTVLIIDFGSQVTQLIARRVRAMGVYCEVVPFQLALEGMQRIKPKAVILSGSPYSVIDEGSPRAPMEIFEMDIPVLGICYGQQIMCVQLGGKVASGHEREFGRAFLEVQENSALFEGVWEKGSCYQVWMSHGDRVTALPEGFRVIGTSKGAPYAAIADEKRRLYAVQFHPEVVHTLDGTKLLQNFVLKISNLKGNWSMASYREQTIAKIRQKVGKSRVICGLSGGVDSSVVAVLLHEAIGDQLTCILVDHGLMRKNEAQEVLTLFRDHYNIKLIHVNAANMFLNALEGEIDPEKKRKTIGRLFIEVFEEETKKIGGAEFLAQGTLYPDVIESISAIGKSVTIKSHHNVGGLPERMNMKLVEPLRELFKDEVRSLGKELGLPEQFIGRHPFPGPGLAIRCPGAVTREKLEILREADAIYLDEIRKAGLYDEIWQAFAILLPVQTVGVMGDGRTYEFVCALRAVTSVDGMSADFYPYDMEFLSKTAARIINEVRGINRVVYDVTSKPPGTIEWE</sequence>
<protein>
    <recommendedName>
        <fullName evidence="1">GMP synthase [glutamine-hydrolyzing]</fullName>
        <ecNumber evidence="1">6.3.5.2</ecNumber>
    </recommendedName>
    <alternativeName>
        <fullName evidence="1">GMP synthetase</fullName>
    </alternativeName>
    <alternativeName>
        <fullName evidence="1">Glutamine amidotransferase</fullName>
    </alternativeName>
</protein>
<accession>Q6G5J3</accession>
<dbReference type="EC" id="6.3.5.2" evidence="1"/>
<dbReference type="EMBL" id="BX897699">
    <property type="protein sequence ID" value="CAF26994.1"/>
    <property type="molecule type" value="Genomic_DNA"/>
</dbReference>
<dbReference type="RefSeq" id="WP_011180134.1">
    <property type="nucleotide sequence ID" value="NZ_LRIJ02000001.1"/>
</dbReference>
<dbReference type="SMR" id="Q6G5J3"/>
<dbReference type="MEROPS" id="C26.957"/>
<dbReference type="PaxDb" id="283166-BH01820"/>
<dbReference type="EnsemblBacteria" id="CAF26994">
    <property type="protein sequence ID" value="CAF26994"/>
    <property type="gene ID" value="BH01820"/>
</dbReference>
<dbReference type="GeneID" id="92984850"/>
<dbReference type="KEGG" id="bhe:BH01820"/>
<dbReference type="eggNOG" id="COG0518">
    <property type="taxonomic scope" value="Bacteria"/>
</dbReference>
<dbReference type="eggNOG" id="COG0519">
    <property type="taxonomic scope" value="Bacteria"/>
</dbReference>
<dbReference type="OrthoDB" id="9802219at2"/>
<dbReference type="UniPathway" id="UPA00189">
    <property type="reaction ID" value="UER00296"/>
</dbReference>
<dbReference type="Proteomes" id="UP000000421">
    <property type="component" value="Chromosome"/>
</dbReference>
<dbReference type="GO" id="GO:0005829">
    <property type="term" value="C:cytosol"/>
    <property type="evidence" value="ECO:0007669"/>
    <property type="project" value="TreeGrafter"/>
</dbReference>
<dbReference type="GO" id="GO:0005524">
    <property type="term" value="F:ATP binding"/>
    <property type="evidence" value="ECO:0007669"/>
    <property type="project" value="UniProtKB-UniRule"/>
</dbReference>
<dbReference type="GO" id="GO:0003921">
    <property type="term" value="F:GMP synthase activity"/>
    <property type="evidence" value="ECO:0007669"/>
    <property type="project" value="InterPro"/>
</dbReference>
<dbReference type="CDD" id="cd01742">
    <property type="entry name" value="GATase1_GMP_Synthase"/>
    <property type="match status" value="1"/>
</dbReference>
<dbReference type="CDD" id="cd01997">
    <property type="entry name" value="GMP_synthase_C"/>
    <property type="match status" value="1"/>
</dbReference>
<dbReference type="FunFam" id="3.30.300.10:FF:000002">
    <property type="entry name" value="GMP synthase [glutamine-hydrolyzing]"/>
    <property type="match status" value="1"/>
</dbReference>
<dbReference type="FunFam" id="3.40.50.620:FF:000001">
    <property type="entry name" value="GMP synthase [glutamine-hydrolyzing]"/>
    <property type="match status" value="1"/>
</dbReference>
<dbReference type="FunFam" id="3.40.50.880:FF:000001">
    <property type="entry name" value="GMP synthase [glutamine-hydrolyzing]"/>
    <property type="match status" value="1"/>
</dbReference>
<dbReference type="Gene3D" id="3.30.300.10">
    <property type="match status" value="1"/>
</dbReference>
<dbReference type="Gene3D" id="3.40.50.880">
    <property type="match status" value="1"/>
</dbReference>
<dbReference type="Gene3D" id="3.40.50.620">
    <property type="entry name" value="HUPs"/>
    <property type="match status" value="1"/>
</dbReference>
<dbReference type="HAMAP" id="MF_00344">
    <property type="entry name" value="GMP_synthase"/>
    <property type="match status" value="1"/>
</dbReference>
<dbReference type="InterPro" id="IPR029062">
    <property type="entry name" value="Class_I_gatase-like"/>
</dbReference>
<dbReference type="InterPro" id="IPR017926">
    <property type="entry name" value="GATASE"/>
</dbReference>
<dbReference type="InterPro" id="IPR001674">
    <property type="entry name" value="GMP_synth_C"/>
</dbReference>
<dbReference type="InterPro" id="IPR004739">
    <property type="entry name" value="GMP_synth_GATase"/>
</dbReference>
<dbReference type="InterPro" id="IPR022955">
    <property type="entry name" value="GMP_synthase"/>
</dbReference>
<dbReference type="InterPro" id="IPR025777">
    <property type="entry name" value="GMPS_ATP_PPase_dom"/>
</dbReference>
<dbReference type="InterPro" id="IPR022310">
    <property type="entry name" value="NAD/GMP_synthase"/>
</dbReference>
<dbReference type="InterPro" id="IPR014729">
    <property type="entry name" value="Rossmann-like_a/b/a_fold"/>
</dbReference>
<dbReference type="NCBIfam" id="TIGR00884">
    <property type="entry name" value="guaA_Cterm"/>
    <property type="match status" value="1"/>
</dbReference>
<dbReference type="NCBIfam" id="TIGR00888">
    <property type="entry name" value="guaA_Nterm"/>
    <property type="match status" value="1"/>
</dbReference>
<dbReference type="NCBIfam" id="NF000848">
    <property type="entry name" value="PRK00074.1"/>
    <property type="match status" value="1"/>
</dbReference>
<dbReference type="PANTHER" id="PTHR11922:SF2">
    <property type="entry name" value="GMP SYNTHASE [GLUTAMINE-HYDROLYZING]"/>
    <property type="match status" value="1"/>
</dbReference>
<dbReference type="PANTHER" id="PTHR11922">
    <property type="entry name" value="GMP SYNTHASE-RELATED"/>
    <property type="match status" value="1"/>
</dbReference>
<dbReference type="Pfam" id="PF00117">
    <property type="entry name" value="GATase"/>
    <property type="match status" value="1"/>
</dbReference>
<dbReference type="Pfam" id="PF00958">
    <property type="entry name" value="GMP_synt_C"/>
    <property type="match status" value="1"/>
</dbReference>
<dbReference type="Pfam" id="PF02540">
    <property type="entry name" value="NAD_synthase"/>
    <property type="match status" value="1"/>
</dbReference>
<dbReference type="PRINTS" id="PR00096">
    <property type="entry name" value="GATASE"/>
</dbReference>
<dbReference type="SUPFAM" id="SSF52402">
    <property type="entry name" value="Adenine nucleotide alpha hydrolases-like"/>
    <property type="match status" value="1"/>
</dbReference>
<dbReference type="SUPFAM" id="SSF52317">
    <property type="entry name" value="Class I glutamine amidotransferase-like"/>
    <property type="match status" value="1"/>
</dbReference>
<dbReference type="SUPFAM" id="SSF54810">
    <property type="entry name" value="GMP synthetase C-terminal dimerisation domain"/>
    <property type="match status" value="1"/>
</dbReference>
<dbReference type="PROSITE" id="PS51273">
    <property type="entry name" value="GATASE_TYPE_1"/>
    <property type="match status" value="1"/>
</dbReference>
<dbReference type="PROSITE" id="PS51553">
    <property type="entry name" value="GMPS_ATP_PPASE"/>
    <property type="match status" value="1"/>
</dbReference>
<comment type="function">
    <text evidence="1">Catalyzes the synthesis of GMP from XMP.</text>
</comment>
<comment type="catalytic activity">
    <reaction evidence="1">
        <text>XMP + L-glutamine + ATP + H2O = GMP + L-glutamate + AMP + diphosphate + 2 H(+)</text>
        <dbReference type="Rhea" id="RHEA:11680"/>
        <dbReference type="ChEBI" id="CHEBI:15377"/>
        <dbReference type="ChEBI" id="CHEBI:15378"/>
        <dbReference type="ChEBI" id="CHEBI:29985"/>
        <dbReference type="ChEBI" id="CHEBI:30616"/>
        <dbReference type="ChEBI" id="CHEBI:33019"/>
        <dbReference type="ChEBI" id="CHEBI:57464"/>
        <dbReference type="ChEBI" id="CHEBI:58115"/>
        <dbReference type="ChEBI" id="CHEBI:58359"/>
        <dbReference type="ChEBI" id="CHEBI:456215"/>
        <dbReference type="EC" id="6.3.5.2"/>
    </reaction>
</comment>
<comment type="pathway">
    <text evidence="1">Purine metabolism; GMP biosynthesis; GMP from XMP (L-Gln route): step 1/1.</text>
</comment>
<comment type="subunit">
    <text evidence="1">Homodimer.</text>
</comment>